<sequence length="282" mass="29849">MPGVTSQSAGSKYDAIPGPLGLASASLMGKVALVTGAGRGIGREMAMELGRRGAKVIVNYANSAETAEEVVQAIKKSGSDAASIKANVSDVDQIVKMFGEAKQIWGRLDIVCSNSGVVSFGHVKDVTPEEFDRVFAINTRGQFFVAREAYKHLEVGGRLILMGSITGQAKGVPKHAVYSGSKGTIETFVRCMAIDFGDKKITVNAVAPGGIKTDMYRDVCREYIPNGGELDDEGVDEFAAGWSPMHRVGLPIDIARVVCFLASQDGEWINGKVLGIDGAACM</sequence>
<evidence type="ECO:0000250" key="1">
    <source>
        <dbReference type="UniProtKB" id="L0E2Z4"/>
    </source>
</evidence>
<evidence type="ECO:0000250" key="2">
    <source>
        <dbReference type="UniProtKB" id="O93868"/>
    </source>
</evidence>
<evidence type="ECO:0000305" key="3"/>
<comment type="function">
    <text>Catalyzes the NADPH-dependent reduction of 1,3,8-trihydroxynaphthalene (T3HN) into (-)-vermelone. Essential for appressorial penetration of colletotrichum lagenarium.</text>
</comment>
<comment type="pathway">
    <text>Pigment biosynthesis; melanin biosynthesis.</text>
</comment>
<comment type="subunit">
    <text>Homotetramer.</text>
</comment>
<comment type="similarity">
    <text evidence="3">Belongs to the short-chain dehydrogenases/reductases (SDR) family.</text>
</comment>
<comment type="sequence caution" evidence="3">
    <conflict type="erroneous gene model prediction">
        <sequence resource="EMBL-CDS" id="BAA18962"/>
    </conflict>
</comment>
<proteinExistence type="inferred from homology"/>
<keyword id="KW-0470">Melanin biosynthesis</keyword>
<keyword id="KW-0521">NADP</keyword>
<keyword id="KW-0560">Oxidoreductase</keyword>
<keyword id="KW-1185">Reference proteome</keyword>
<protein>
    <recommendedName>
        <fullName>Trihydroxynaphthalene reductase</fullName>
        <ecNumber>1.1.1.-</ecNumber>
    </recommendedName>
    <alternativeName>
        <fullName>T3HN reductase</fullName>
    </alternativeName>
</protein>
<accession>P87025</accession>
<accession>A0A484G104</accession>
<accession>N4VTL6</accession>
<dbReference type="EC" id="1.1.1.-"/>
<dbReference type="EMBL" id="D83988">
    <property type="protein sequence ID" value="BAA18962.1"/>
    <property type="status" value="ALT_SEQ"/>
    <property type="molecule type" value="Genomic_DNA"/>
</dbReference>
<dbReference type="EMBL" id="KB725704">
    <property type="protein sequence ID" value="ENH87277.1"/>
    <property type="molecule type" value="Genomic_DNA"/>
</dbReference>
<dbReference type="EMBL" id="AMCV02000005">
    <property type="protein sequence ID" value="TDZ23821.1"/>
    <property type="molecule type" value="Genomic_DNA"/>
</dbReference>
<dbReference type="SMR" id="P87025"/>
<dbReference type="STRING" id="1213857.P87025"/>
<dbReference type="EnsemblFungi" id="ENH87277">
    <property type="protein sequence ID" value="ENH87277"/>
    <property type="gene ID" value="Cob_04570"/>
</dbReference>
<dbReference type="eggNOG" id="KOG0725">
    <property type="taxonomic scope" value="Eukaryota"/>
</dbReference>
<dbReference type="HOGENOM" id="CLU_010194_1_3_1"/>
<dbReference type="OrthoDB" id="47007at2759"/>
<dbReference type="UniPathway" id="UPA00785"/>
<dbReference type="PHI-base" id="PHI:59"/>
<dbReference type="Proteomes" id="UP000014480">
    <property type="component" value="Unassembled WGS sequence"/>
</dbReference>
<dbReference type="GO" id="GO:0016491">
    <property type="term" value="F:oxidoreductase activity"/>
    <property type="evidence" value="ECO:0007669"/>
    <property type="project" value="UniProtKB-KW"/>
</dbReference>
<dbReference type="GO" id="GO:0042438">
    <property type="term" value="P:melanin biosynthetic process"/>
    <property type="evidence" value="ECO:0007669"/>
    <property type="project" value="UniProtKB-UniPathway"/>
</dbReference>
<dbReference type="CDD" id="cd05362">
    <property type="entry name" value="THN_reductase-like_SDR_c"/>
    <property type="match status" value="1"/>
</dbReference>
<dbReference type="FunFam" id="3.40.50.720:FF:000084">
    <property type="entry name" value="Short-chain dehydrogenase reductase"/>
    <property type="match status" value="1"/>
</dbReference>
<dbReference type="Gene3D" id="3.40.50.720">
    <property type="entry name" value="NAD(P)-binding Rossmann-like Domain"/>
    <property type="match status" value="1"/>
</dbReference>
<dbReference type="InterPro" id="IPR036291">
    <property type="entry name" value="NAD(P)-bd_dom_sf"/>
</dbReference>
<dbReference type="InterPro" id="IPR002347">
    <property type="entry name" value="SDR_fam"/>
</dbReference>
<dbReference type="PANTHER" id="PTHR43639">
    <property type="entry name" value="OXIDOREDUCTASE, SHORT-CHAIN DEHYDROGENASE/REDUCTASE FAMILY (AFU_ORTHOLOGUE AFUA_5G02870)"/>
    <property type="match status" value="1"/>
</dbReference>
<dbReference type="PANTHER" id="PTHR43639:SF1">
    <property type="entry name" value="SHORT-CHAIN DEHYDROGENASE_REDUCTASE FAMILY PROTEIN"/>
    <property type="match status" value="1"/>
</dbReference>
<dbReference type="Pfam" id="PF13561">
    <property type="entry name" value="adh_short_C2"/>
    <property type="match status" value="1"/>
</dbReference>
<dbReference type="PRINTS" id="PR00081">
    <property type="entry name" value="GDHRDH"/>
</dbReference>
<dbReference type="PRINTS" id="PR00080">
    <property type="entry name" value="SDRFAMILY"/>
</dbReference>
<dbReference type="SUPFAM" id="SSF51735">
    <property type="entry name" value="NAD(P)-binding Rossmann-fold domains"/>
    <property type="match status" value="1"/>
</dbReference>
<feature type="chain" id="PRO_0000054783" description="Trihydroxynaphthalene reductase">
    <location>
        <begin position="1"/>
        <end position="282"/>
    </location>
</feature>
<feature type="active site" description="Proton donor" evidence="2">
    <location>
        <position position="164"/>
    </location>
</feature>
<feature type="active site" description="Proton donor" evidence="2">
    <location>
        <position position="178"/>
    </location>
</feature>
<feature type="active site" description="Lowers pKa of active site Tyr" evidence="2">
    <location>
        <position position="182"/>
    </location>
</feature>
<feature type="binding site" evidence="1">
    <location>
        <position position="41"/>
    </location>
    <ligand>
        <name>NADP(+)</name>
        <dbReference type="ChEBI" id="CHEBI:58349"/>
    </ligand>
</feature>
<feature type="binding site" evidence="2">
    <location>
        <position position="114"/>
    </location>
    <ligand>
        <name>NADP(+)</name>
        <dbReference type="ChEBI" id="CHEBI:58349"/>
    </ligand>
</feature>
<feature type="binding site" evidence="1">
    <location>
        <position position="147"/>
    </location>
    <ligand>
        <name>NADP(+)</name>
        <dbReference type="ChEBI" id="CHEBI:58349"/>
    </ligand>
</feature>
<feature type="binding site" evidence="2">
    <location>
        <position position="178"/>
    </location>
    <ligand>
        <name>NADP(+)</name>
        <dbReference type="ChEBI" id="CHEBI:58349"/>
    </ligand>
</feature>
<feature type="binding site" evidence="2">
    <location>
        <position position="182"/>
    </location>
    <ligand>
        <name>NADP(+)</name>
        <dbReference type="ChEBI" id="CHEBI:58349"/>
    </ligand>
</feature>
<feature type="binding site" evidence="2">
    <location>
        <position position="211"/>
    </location>
    <ligand>
        <name>NADP(+)</name>
        <dbReference type="ChEBI" id="CHEBI:58349"/>
    </ligand>
</feature>
<feature type="binding site" evidence="1">
    <location>
        <position position="213"/>
    </location>
    <ligand>
        <name>NADP(+)</name>
        <dbReference type="ChEBI" id="CHEBI:58349"/>
    </ligand>
</feature>
<organism>
    <name type="scientific">Colletotrichum orbiculare (strain 104-T / ATCC 96160 / CBS 514.97 / LARS 414 / MAFF 240422)</name>
    <name type="common">Cucumber anthracnose fungus</name>
    <name type="synonym">Colletotrichum lagenarium</name>
    <dbReference type="NCBI Taxonomy" id="1213857"/>
    <lineage>
        <taxon>Eukaryota</taxon>
        <taxon>Fungi</taxon>
        <taxon>Dikarya</taxon>
        <taxon>Ascomycota</taxon>
        <taxon>Pezizomycotina</taxon>
        <taxon>Sordariomycetes</taxon>
        <taxon>Hypocreomycetidae</taxon>
        <taxon>Glomerellales</taxon>
        <taxon>Glomerellaceae</taxon>
        <taxon>Colletotrichum</taxon>
        <taxon>Colletotrichum orbiculare species complex</taxon>
    </lineage>
</organism>
<gene>
    <name type="primary">THR1</name>
    <name type="ORF">Cob_04570</name>
    <name type="ORF">Cob_v003479</name>
</gene>
<name>THR1_COLOR</name>
<reference key="1">
    <citation type="journal article" date="1996" name="Mol. Plant Microbe Interact.">
        <title>Cloning and characterization of a melanin biosynthetic THR1 reductase gene essential for appressorial penetration of Colletotrichum lagenarium.</title>
        <authorList>
            <person name="Perpetua N.S."/>
            <person name="Kubo Y."/>
            <person name="Yasuda N."/>
            <person name="Takano Y."/>
            <person name="Furusawa I."/>
        </authorList>
    </citation>
    <scope>NUCLEOTIDE SEQUENCE [GENOMIC DNA]</scope>
    <source>
        <strain>104-T / ATCC 96160 / CBS 514.97 / LARS 414 / MAFF 240422</strain>
    </source>
</reference>
<reference key="2">
    <citation type="journal article" date="2013" name="New Phytol.">
        <title>Comparative genomic and transcriptomic analyses reveal the hemibiotrophic stage shift of Colletotrichum fungi.</title>
        <authorList>
            <person name="Gan P."/>
            <person name="Ikeda K."/>
            <person name="Irieda H."/>
            <person name="Narusaka M."/>
            <person name="O'Connell R.J."/>
            <person name="Narusaka Y."/>
            <person name="Takano Y."/>
            <person name="Kubo Y."/>
            <person name="Shirasu K."/>
        </authorList>
    </citation>
    <scope>NUCLEOTIDE SEQUENCE [LARGE SCALE GENOMIC DNA]</scope>
    <source>
        <strain>104-T / ATCC 96160 / CBS 514.97 / LARS 414 / MAFF 240422</strain>
    </source>
</reference>
<reference key="3">
    <citation type="journal article" date="2019" name="Mol. Plant Microbe Interact.">
        <title>Genome sequence resources for four phytopathogenic fungi from the Colletotrichum orbiculare species complex.</title>
        <authorList>
            <person name="Gan P."/>
            <person name="Tsushima A."/>
            <person name="Narusaka M."/>
            <person name="Narusaka Y."/>
            <person name="Takano Y."/>
            <person name="Kubo Y."/>
            <person name="Shirasu K."/>
        </authorList>
    </citation>
    <scope>GENOME REANNOTATION</scope>
    <source>
        <strain>104-T / ATCC 96160 / CBS 514.97 / LARS 414 / MAFF 240422</strain>
    </source>
</reference>